<gene>
    <name type="primary">glgA2</name>
    <name type="ordered locus">Atu5285</name>
    <name type="ORF">AGR_pAT_410</name>
</gene>
<geneLocation type="plasmid">
    <name>AT</name>
</geneLocation>
<feature type="chain" id="PRO_0000188585" description="Glycogen synthase 2">
    <location>
        <begin position="1"/>
        <end position="509"/>
    </location>
</feature>
<feature type="binding site" evidence="1">
    <location>
        <position position="15"/>
    </location>
    <ligand>
        <name>ADP-alpha-D-glucose</name>
        <dbReference type="ChEBI" id="CHEBI:57498"/>
    </ligand>
</feature>
<dbReference type="EC" id="2.4.1.21"/>
<dbReference type="EMBL" id="AE007872">
    <property type="protein sequence ID" value="AAK90661.1"/>
    <property type="molecule type" value="Genomic_DNA"/>
</dbReference>
<dbReference type="PIR" id="AH3194">
    <property type="entry name" value="AH3194"/>
</dbReference>
<dbReference type="RefSeq" id="NP_396220.1">
    <property type="nucleotide sequence ID" value="NC_003064.2"/>
</dbReference>
<dbReference type="RefSeq" id="WP_010974543.1">
    <property type="nucleotide sequence ID" value="NC_003064.2"/>
</dbReference>
<dbReference type="SMR" id="Q8UK38"/>
<dbReference type="CAZy" id="GT5">
    <property type="family name" value="Glycosyltransferase Family 5"/>
</dbReference>
<dbReference type="EnsemblBacteria" id="AAK90661">
    <property type="protein sequence ID" value="AAK90661"/>
    <property type="gene ID" value="Atu5285"/>
</dbReference>
<dbReference type="GeneID" id="1137058"/>
<dbReference type="KEGG" id="atu:Atu5285"/>
<dbReference type="PATRIC" id="fig|176299.10.peg.4960"/>
<dbReference type="eggNOG" id="COG0297">
    <property type="taxonomic scope" value="Bacteria"/>
</dbReference>
<dbReference type="HOGENOM" id="CLU_009583_18_4_5"/>
<dbReference type="OrthoDB" id="9808590at2"/>
<dbReference type="PhylomeDB" id="Q8UK38"/>
<dbReference type="UniPathway" id="UPA00164"/>
<dbReference type="Proteomes" id="UP000000813">
    <property type="component" value="Plasmid At"/>
</dbReference>
<dbReference type="GO" id="GO:0005829">
    <property type="term" value="C:cytosol"/>
    <property type="evidence" value="ECO:0007669"/>
    <property type="project" value="TreeGrafter"/>
</dbReference>
<dbReference type="GO" id="GO:0009011">
    <property type="term" value="F:alpha-1,4-glucan glucosyltransferase (ADP-glucose donor) activity"/>
    <property type="evidence" value="ECO:0007669"/>
    <property type="project" value="UniProtKB-UniRule"/>
</dbReference>
<dbReference type="GO" id="GO:0004373">
    <property type="term" value="F:alpha-1,4-glucan glucosyltransferase (UDP-glucose donor) activity"/>
    <property type="evidence" value="ECO:0007669"/>
    <property type="project" value="InterPro"/>
</dbReference>
<dbReference type="GO" id="GO:0005978">
    <property type="term" value="P:glycogen biosynthetic process"/>
    <property type="evidence" value="ECO:0007669"/>
    <property type="project" value="UniProtKB-UniRule"/>
</dbReference>
<dbReference type="CDD" id="cd03791">
    <property type="entry name" value="GT5_Glycogen_synthase_DULL1-like"/>
    <property type="match status" value="1"/>
</dbReference>
<dbReference type="Gene3D" id="3.40.50.2000">
    <property type="entry name" value="Glycogen Phosphorylase B"/>
    <property type="match status" value="2"/>
</dbReference>
<dbReference type="HAMAP" id="MF_00484">
    <property type="entry name" value="Glycogen_synth"/>
    <property type="match status" value="1"/>
</dbReference>
<dbReference type="InterPro" id="IPR001296">
    <property type="entry name" value="Glyco_trans_1"/>
</dbReference>
<dbReference type="InterPro" id="IPR011835">
    <property type="entry name" value="GS/SS"/>
</dbReference>
<dbReference type="InterPro" id="IPR013534">
    <property type="entry name" value="Starch_synth_cat_dom"/>
</dbReference>
<dbReference type="NCBIfam" id="TIGR02095">
    <property type="entry name" value="glgA"/>
    <property type="match status" value="1"/>
</dbReference>
<dbReference type="NCBIfam" id="NF001899">
    <property type="entry name" value="PRK00654.1-2"/>
    <property type="match status" value="1"/>
</dbReference>
<dbReference type="PANTHER" id="PTHR45825:SF11">
    <property type="entry name" value="ALPHA AMYLASE DOMAIN-CONTAINING PROTEIN"/>
    <property type="match status" value="1"/>
</dbReference>
<dbReference type="PANTHER" id="PTHR45825">
    <property type="entry name" value="GRANULE-BOUND STARCH SYNTHASE 1, CHLOROPLASTIC/AMYLOPLASTIC"/>
    <property type="match status" value="1"/>
</dbReference>
<dbReference type="Pfam" id="PF08323">
    <property type="entry name" value="Glyco_transf_5"/>
    <property type="match status" value="1"/>
</dbReference>
<dbReference type="Pfam" id="PF00534">
    <property type="entry name" value="Glycos_transf_1"/>
    <property type="match status" value="1"/>
</dbReference>
<dbReference type="SUPFAM" id="SSF53756">
    <property type="entry name" value="UDP-Glycosyltransferase/glycogen phosphorylase"/>
    <property type="match status" value="1"/>
</dbReference>
<keyword id="KW-0320">Glycogen biosynthesis</keyword>
<keyword id="KW-0328">Glycosyltransferase</keyword>
<keyword id="KW-0614">Plasmid</keyword>
<keyword id="KW-1185">Reference proteome</keyword>
<keyword id="KW-0808">Transferase</keyword>
<reference key="1">
    <citation type="journal article" date="2001" name="Science">
        <title>The genome of the natural genetic engineer Agrobacterium tumefaciens C58.</title>
        <authorList>
            <person name="Wood D.W."/>
            <person name="Setubal J.C."/>
            <person name="Kaul R."/>
            <person name="Monks D.E."/>
            <person name="Kitajima J.P."/>
            <person name="Okura V.K."/>
            <person name="Zhou Y."/>
            <person name="Chen L."/>
            <person name="Wood G.E."/>
            <person name="Almeida N.F. Jr."/>
            <person name="Woo L."/>
            <person name="Chen Y."/>
            <person name="Paulsen I.T."/>
            <person name="Eisen J.A."/>
            <person name="Karp P.D."/>
            <person name="Bovee D. Sr."/>
            <person name="Chapman P."/>
            <person name="Clendenning J."/>
            <person name="Deatherage G."/>
            <person name="Gillet W."/>
            <person name="Grant C."/>
            <person name="Kutyavin T."/>
            <person name="Levy R."/>
            <person name="Li M.-J."/>
            <person name="McClelland E."/>
            <person name="Palmieri A."/>
            <person name="Raymond C."/>
            <person name="Rouse G."/>
            <person name="Saenphimmachak C."/>
            <person name="Wu Z."/>
            <person name="Romero P."/>
            <person name="Gordon D."/>
            <person name="Zhang S."/>
            <person name="Yoo H."/>
            <person name="Tao Y."/>
            <person name="Biddle P."/>
            <person name="Jung M."/>
            <person name="Krespan W."/>
            <person name="Perry M."/>
            <person name="Gordon-Kamm B."/>
            <person name="Liao L."/>
            <person name="Kim S."/>
            <person name="Hendrick C."/>
            <person name="Zhao Z.-Y."/>
            <person name="Dolan M."/>
            <person name="Chumley F."/>
            <person name="Tingey S.V."/>
            <person name="Tomb J.-F."/>
            <person name="Gordon M.P."/>
            <person name="Olson M.V."/>
            <person name="Nester E.W."/>
        </authorList>
    </citation>
    <scope>NUCLEOTIDE SEQUENCE [LARGE SCALE GENOMIC DNA]</scope>
</reference>
<reference key="2">
    <citation type="journal article" date="2001" name="Science">
        <title>Genome sequence of the plant pathogen and biotechnology agent Agrobacterium tumefaciens C58.</title>
        <authorList>
            <person name="Goodner B."/>
            <person name="Hinkle G."/>
            <person name="Gattung S."/>
            <person name="Miller N."/>
            <person name="Blanchard M."/>
            <person name="Qurollo B."/>
            <person name="Goldman B.S."/>
            <person name="Cao Y."/>
            <person name="Askenazi M."/>
            <person name="Halling C."/>
            <person name="Mullin L."/>
            <person name="Houmiel K."/>
            <person name="Gordon J."/>
            <person name="Vaudin M."/>
            <person name="Iartchouk O."/>
            <person name="Epp A."/>
            <person name="Liu F."/>
            <person name="Wollam C."/>
            <person name="Allinger M."/>
            <person name="Doughty D."/>
            <person name="Scott C."/>
            <person name="Lappas C."/>
            <person name="Markelz B."/>
            <person name="Flanagan C."/>
            <person name="Crowell C."/>
            <person name="Gurson J."/>
            <person name="Lomo C."/>
            <person name="Sear C."/>
            <person name="Strub G."/>
            <person name="Cielo C."/>
            <person name="Slater S."/>
        </authorList>
    </citation>
    <scope>NUCLEOTIDE SEQUENCE [LARGE SCALE GENOMIC DNA]</scope>
    <source>
        <strain>C58 / ATCC 33970</strain>
    </source>
</reference>
<sequence>MRILAVTAEMFPFVKTGGLADATSALPQALERKGADVRTLLPLYRGLTPLVRGRKPVLVANILEQPVSVYYVVSDGHKLLLLEAASLFDRDGHPYGVKGEPFADNDLRFAVLSKVAAEIALGAIDGWQPDVVHVHDWHAALTCVYLADSTPSVASVLTLHNLAFQGQYPLERAGMLGLPSHLCTVDCLEYYDDMSFLKGGLTTASAVTTVSPTYAREILTPEMGMGMHGVLARRRGDLRGIVNGVDHDVWNPATDPYILANFTAATATRRSLNKYALLQALGLAPTQGPVFGVVSRLTWQKGIDLLPHVVPLIIERKGRLIVHGEGDTALEDSLQALAKRYPELVCAHIGYDERLAHMIQAGSDFIIQPSRFEPCGLTQLYALRYGALPIVSRTGGLAETIIDANDAAIEAGVATGFQFEPANEDDLRAALERAISAYNDRELFRRLQTQAMQANFSWDKSAAQYMALFESLVGNSTRETDAVADIRTETFAKIRADRRLAGTPGSPTG</sequence>
<protein>
    <recommendedName>
        <fullName>Glycogen synthase 2</fullName>
        <ecNumber>2.4.1.21</ecNumber>
    </recommendedName>
    <alternativeName>
        <fullName>Starch [bacterial glycogen] synthase 2</fullName>
    </alternativeName>
</protein>
<comment type="function">
    <text evidence="1">Synthesizes alpha-1,4-glucan chains using ADP-glucose.</text>
</comment>
<comment type="catalytic activity">
    <reaction>
        <text>[(1-&gt;4)-alpha-D-glucosyl](n) + ADP-alpha-D-glucose = [(1-&gt;4)-alpha-D-glucosyl](n+1) + ADP + H(+)</text>
        <dbReference type="Rhea" id="RHEA:18189"/>
        <dbReference type="Rhea" id="RHEA-COMP:9584"/>
        <dbReference type="Rhea" id="RHEA-COMP:9587"/>
        <dbReference type="ChEBI" id="CHEBI:15378"/>
        <dbReference type="ChEBI" id="CHEBI:15444"/>
        <dbReference type="ChEBI" id="CHEBI:57498"/>
        <dbReference type="ChEBI" id="CHEBI:456216"/>
        <dbReference type="EC" id="2.4.1.21"/>
    </reaction>
</comment>
<comment type="pathway">
    <text>Glycan biosynthesis; glycogen biosynthesis.</text>
</comment>
<comment type="similarity">
    <text evidence="2">Belongs to the glycosyltransferase 1 family. Bacterial/plant glycogen synthase subfamily.</text>
</comment>
<name>GLGA2_AGRFC</name>
<organism>
    <name type="scientific">Agrobacterium fabrum (strain C58 / ATCC 33970)</name>
    <name type="common">Agrobacterium tumefaciens (strain C58)</name>
    <dbReference type="NCBI Taxonomy" id="176299"/>
    <lineage>
        <taxon>Bacteria</taxon>
        <taxon>Pseudomonadati</taxon>
        <taxon>Pseudomonadota</taxon>
        <taxon>Alphaproteobacteria</taxon>
        <taxon>Hyphomicrobiales</taxon>
        <taxon>Rhizobiaceae</taxon>
        <taxon>Rhizobium/Agrobacterium group</taxon>
        <taxon>Agrobacterium</taxon>
        <taxon>Agrobacterium tumefaciens complex</taxon>
    </lineage>
</organism>
<evidence type="ECO:0000250" key="1"/>
<evidence type="ECO:0000305" key="2"/>
<accession>Q8UK38</accession>
<proteinExistence type="inferred from homology"/>